<sequence length="463" mass="53476">MTKDMETIVSLAKHRGFVFPGSDIYGGLSNTWDYGPLGVELKNNVKKAWWQKFITQSPYNVGIDAAILMNPKTWEASGHLGNFNDPMIDNKDSKIRYRADKIIEDYMLNEKGDENFVADGLSFDEMKRIIDEEGIVCPVSGTANWTDIRQFNLMFKTFQGVTEDSTNEIFLRPETAQGIFVNYKNVQRTMRKKLPFGIGQIGKSFRNEITPGNFIFRTREFEQMELEFFCKPGEEIEWQNYWKTFASQWLKDLNLSEEATRLRDHDADELSHYSNATTDIEYRFPFGWGELWGIASRTDFDLKKHSEHSGEDFQYHDQETGEKYIPYCIEPSLGADRVTLAFLCDAYDEEGVEGSKDSRTVLHFHPALAPYKAAVLPLSKKLSGDAIKVFEELSADFAIDFDESQSIGKRYRRQDEIGTPYCITFDFDSLEDEKVTVRDRDTMEQVRMPITELKSFLAEKVKF</sequence>
<feature type="chain" id="PRO_1000047388" description="Glycine--tRNA ligase">
    <location>
        <begin position="1"/>
        <end position="463"/>
    </location>
</feature>
<feature type="binding site" evidence="1">
    <location>
        <position position="98"/>
    </location>
    <ligand>
        <name>substrate</name>
    </ligand>
</feature>
<feature type="binding site" evidence="1">
    <location>
        <position position="174"/>
    </location>
    <ligand>
        <name>substrate</name>
    </ligand>
</feature>
<feature type="binding site" evidence="1">
    <location>
        <begin position="206"/>
        <end position="208"/>
    </location>
    <ligand>
        <name>ATP</name>
        <dbReference type="ChEBI" id="CHEBI:30616"/>
    </ligand>
</feature>
<feature type="binding site" evidence="1">
    <location>
        <begin position="216"/>
        <end position="221"/>
    </location>
    <ligand>
        <name>ATP</name>
        <dbReference type="ChEBI" id="CHEBI:30616"/>
    </ligand>
</feature>
<feature type="binding site" evidence="1">
    <location>
        <begin position="221"/>
        <end position="225"/>
    </location>
    <ligand>
        <name>substrate</name>
    </ligand>
</feature>
<feature type="binding site" evidence="1">
    <location>
        <begin position="290"/>
        <end position="291"/>
    </location>
    <ligand>
        <name>ATP</name>
        <dbReference type="ChEBI" id="CHEBI:30616"/>
    </ligand>
</feature>
<feature type="binding site" evidence="1">
    <location>
        <begin position="330"/>
        <end position="334"/>
    </location>
    <ligand>
        <name>substrate</name>
    </ligand>
</feature>
<feature type="binding site" evidence="1">
    <location>
        <begin position="334"/>
        <end position="337"/>
    </location>
    <ligand>
        <name>ATP</name>
        <dbReference type="ChEBI" id="CHEBI:30616"/>
    </ligand>
</feature>
<protein>
    <recommendedName>
        <fullName evidence="1">Glycine--tRNA ligase</fullName>
        <ecNumber evidence="1">6.1.1.14</ecNumber>
    </recommendedName>
    <alternativeName>
        <fullName evidence="1">Glycyl-tRNA synthetase</fullName>
        <shortName evidence="1">GlyRS</shortName>
    </alternativeName>
</protein>
<dbReference type="EC" id="6.1.1.14" evidence="1"/>
<dbReference type="EMBL" id="AP008934">
    <property type="protein sequence ID" value="BAE18336.1"/>
    <property type="molecule type" value="Genomic_DNA"/>
</dbReference>
<dbReference type="RefSeq" id="WP_002483167.1">
    <property type="nucleotide sequence ID" value="NZ_MTGA01000038.1"/>
</dbReference>
<dbReference type="SMR" id="Q49Y08"/>
<dbReference type="KEGG" id="ssp:SSP1191"/>
<dbReference type="eggNOG" id="COG0423">
    <property type="taxonomic scope" value="Bacteria"/>
</dbReference>
<dbReference type="HOGENOM" id="CLU_015515_2_1_9"/>
<dbReference type="OrthoDB" id="9760853at2"/>
<dbReference type="Proteomes" id="UP000006371">
    <property type="component" value="Chromosome"/>
</dbReference>
<dbReference type="GO" id="GO:0005737">
    <property type="term" value="C:cytoplasm"/>
    <property type="evidence" value="ECO:0007669"/>
    <property type="project" value="UniProtKB-SubCell"/>
</dbReference>
<dbReference type="GO" id="GO:0005524">
    <property type="term" value="F:ATP binding"/>
    <property type="evidence" value="ECO:0007669"/>
    <property type="project" value="UniProtKB-UniRule"/>
</dbReference>
<dbReference type="GO" id="GO:0140096">
    <property type="term" value="F:catalytic activity, acting on a protein"/>
    <property type="evidence" value="ECO:0007669"/>
    <property type="project" value="UniProtKB-ARBA"/>
</dbReference>
<dbReference type="GO" id="GO:0004820">
    <property type="term" value="F:glycine-tRNA ligase activity"/>
    <property type="evidence" value="ECO:0000250"/>
    <property type="project" value="UniProtKB"/>
</dbReference>
<dbReference type="GO" id="GO:0046983">
    <property type="term" value="F:protein dimerization activity"/>
    <property type="evidence" value="ECO:0000250"/>
    <property type="project" value="UniProtKB"/>
</dbReference>
<dbReference type="GO" id="GO:0016740">
    <property type="term" value="F:transferase activity"/>
    <property type="evidence" value="ECO:0007669"/>
    <property type="project" value="UniProtKB-ARBA"/>
</dbReference>
<dbReference type="GO" id="GO:0006426">
    <property type="term" value="P:glycyl-tRNA aminoacylation"/>
    <property type="evidence" value="ECO:0007669"/>
    <property type="project" value="UniProtKB-UniRule"/>
</dbReference>
<dbReference type="CDD" id="cd00774">
    <property type="entry name" value="GlyRS-like_core"/>
    <property type="match status" value="1"/>
</dbReference>
<dbReference type="CDD" id="cd00858">
    <property type="entry name" value="GlyRS_anticodon"/>
    <property type="match status" value="1"/>
</dbReference>
<dbReference type="FunFam" id="3.40.50.800:FF:000002">
    <property type="entry name" value="Glycine--tRNA ligase"/>
    <property type="match status" value="1"/>
</dbReference>
<dbReference type="Gene3D" id="3.40.50.800">
    <property type="entry name" value="Anticodon-binding domain"/>
    <property type="match status" value="1"/>
</dbReference>
<dbReference type="Gene3D" id="3.30.930.10">
    <property type="entry name" value="Bira Bifunctional Protein, Domain 2"/>
    <property type="match status" value="1"/>
</dbReference>
<dbReference type="HAMAP" id="MF_00253_B">
    <property type="entry name" value="Gly_tRNA_synth_B"/>
    <property type="match status" value="1"/>
</dbReference>
<dbReference type="InterPro" id="IPR002314">
    <property type="entry name" value="aa-tRNA-synt_IIb"/>
</dbReference>
<dbReference type="InterPro" id="IPR006195">
    <property type="entry name" value="aa-tRNA-synth_II"/>
</dbReference>
<dbReference type="InterPro" id="IPR045864">
    <property type="entry name" value="aa-tRNA-synth_II/BPL/LPL"/>
</dbReference>
<dbReference type="InterPro" id="IPR004154">
    <property type="entry name" value="Anticodon-bd"/>
</dbReference>
<dbReference type="InterPro" id="IPR036621">
    <property type="entry name" value="Anticodon-bd_dom_sf"/>
</dbReference>
<dbReference type="InterPro" id="IPR027031">
    <property type="entry name" value="Gly-tRNA_synthase/POLG2"/>
</dbReference>
<dbReference type="InterPro" id="IPR022961">
    <property type="entry name" value="Gly_tRNA_ligase_bac"/>
</dbReference>
<dbReference type="InterPro" id="IPR033731">
    <property type="entry name" value="GlyRS-like_core"/>
</dbReference>
<dbReference type="InterPro" id="IPR002315">
    <property type="entry name" value="tRNA-synt_gly"/>
</dbReference>
<dbReference type="NCBIfam" id="TIGR00389">
    <property type="entry name" value="glyS_dimeric"/>
    <property type="match status" value="1"/>
</dbReference>
<dbReference type="NCBIfam" id="NF003211">
    <property type="entry name" value="PRK04173.1"/>
    <property type="match status" value="1"/>
</dbReference>
<dbReference type="PANTHER" id="PTHR10745:SF8">
    <property type="entry name" value="DNA POLYMERASE SUBUNIT GAMMA-2, MITOCHONDRIAL"/>
    <property type="match status" value="1"/>
</dbReference>
<dbReference type="PANTHER" id="PTHR10745">
    <property type="entry name" value="GLYCYL-TRNA SYNTHETASE/DNA POLYMERASE SUBUNIT GAMMA-2"/>
    <property type="match status" value="1"/>
</dbReference>
<dbReference type="Pfam" id="PF03129">
    <property type="entry name" value="HGTP_anticodon"/>
    <property type="match status" value="1"/>
</dbReference>
<dbReference type="Pfam" id="PF00587">
    <property type="entry name" value="tRNA-synt_2b"/>
    <property type="match status" value="1"/>
</dbReference>
<dbReference type="PRINTS" id="PR01043">
    <property type="entry name" value="TRNASYNTHGLY"/>
</dbReference>
<dbReference type="SUPFAM" id="SSF52954">
    <property type="entry name" value="Class II aaRS ABD-related"/>
    <property type="match status" value="1"/>
</dbReference>
<dbReference type="SUPFAM" id="SSF55681">
    <property type="entry name" value="Class II aaRS and biotin synthetases"/>
    <property type="match status" value="1"/>
</dbReference>
<dbReference type="PROSITE" id="PS50862">
    <property type="entry name" value="AA_TRNA_LIGASE_II"/>
    <property type="match status" value="1"/>
</dbReference>
<keyword id="KW-0030">Aminoacyl-tRNA synthetase</keyword>
<keyword id="KW-0067">ATP-binding</keyword>
<keyword id="KW-0963">Cytoplasm</keyword>
<keyword id="KW-0436">Ligase</keyword>
<keyword id="KW-0547">Nucleotide-binding</keyword>
<keyword id="KW-0648">Protein biosynthesis</keyword>
<keyword id="KW-1185">Reference proteome</keyword>
<evidence type="ECO:0000255" key="1">
    <source>
        <dbReference type="HAMAP-Rule" id="MF_00253"/>
    </source>
</evidence>
<comment type="function">
    <text evidence="1">Catalyzes the attachment of glycine to tRNA(Gly).</text>
</comment>
<comment type="catalytic activity">
    <reaction evidence="1">
        <text>tRNA(Gly) + glycine + ATP = glycyl-tRNA(Gly) + AMP + diphosphate</text>
        <dbReference type="Rhea" id="RHEA:16013"/>
        <dbReference type="Rhea" id="RHEA-COMP:9664"/>
        <dbReference type="Rhea" id="RHEA-COMP:9683"/>
        <dbReference type="ChEBI" id="CHEBI:30616"/>
        <dbReference type="ChEBI" id="CHEBI:33019"/>
        <dbReference type="ChEBI" id="CHEBI:57305"/>
        <dbReference type="ChEBI" id="CHEBI:78442"/>
        <dbReference type="ChEBI" id="CHEBI:78522"/>
        <dbReference type="ChEBI" id="CHEBI:456215"/>
        <dbReference type="EC" id="6.1.1.14"/>
    </reaction>
</comment>
<comment type="subunit">
    <text evidence="1">Homodimer.</text>
</comment>
<comment type="subcellular location">
    <subcellularLocation>
        <location evidence="1">Cytoplasm</location>
    </subcellularLocation>
</comment>
<comment type="similarity">
    <text evidence="1">Belongs to the class-II aminoacyl-tRNA synthetase family.</text>
</comment>
<gene>
    <name evidence="1" type="primary">glyQS</name>
    <name type="ordered locus">SSP1191</name>
</gene>
<accession>Q49Y08</accession>
<organism>
    <name type="scientific">Staphylococcus saprophyticus subsp. saprophyticus (strain ATCC 15305 / DSM 20229 / NCIMB 8711 / NCTC 7292 / S-41)</name>
    <dbReference type="NCBI Taxonomy" id="342451"/>
    <lineage>
        <taxon>Bacteria</taxon>
        <taxon>Bacillati</taxon>
        <taxon>Bacillota</taxon>
        <taxon>Bacilli</taxon>
        <taxon>Bacillales</taxon>
        <taxon>Staphylococcaceae</taxon>
        <taxon>Staphylococcus</taxon>
    </lineage>
</organism>
<name>SYG_STAS1</name>
<proteinExistence type="inferred from homology"/>
<reference key="1">
    <citation type="journal article" date="2005" name="Proc. Natl. Acad. Sci. U.S.A.">
        <title>Whole genome sequence of Staphylococcus saprophyticus reveals the pathogenesis of uncomplicated urinary tract infection.</title>
        <authorList>
            <person name="Kuroda M."/>
            <person name="Yamashita A."/>
            <person name="Hirakawa H."/>
            <person name="Kumano M."/>
            <person name="Morikawa K."/>
            <person name="Higashide M."/>
            <person name="Maruyama A."/>
            <person name="Inose Y."/>
            <person name="Matoba K."/>
            <person name="Toh H."/>
            <person name="Kuhara S."/>
            <person name="Hattori M."/>
            <person name="Ohta T."/>
        </authorList>
    </citation>
    <scope>NUCLEOTIDE SEQUENCE [LARGE SCALE GENOMIC DNA]</scope>
    <source>
        <strain>ATCC 15305 / DSM 20229 / NCIMB 8711 / NCTC 7292 / S-41</strain>
    </source>
</reference>